<sequence>MSDHEVKMVVLSTENLDESIKFYETLGFSLKFRDGAHFAALDGGAVTLALATPVDHPIPGKVVVGIKTADVDAAAKEIEATGGAIIKGPYDDAHERRAVVYDNTGNGLVFYSPLKR</sequence>
<reference key="1">
    <citation type="submission" date="2006-10" db="EMBL/GenBank/DDBJ databases">
        <authorList>
            <person name="Fleischmann R.D."/>
            <person name="Dodson R.J."/>
            <person name="Haft D.H."/>
            <person name="Merkel J.S."/>
            <person name="Nelson W.C."/>
            <person name="Fraser C.M."/>
        </authorList>
    </citation>
    <scope>NUCLEOTIDE SEQUENCE [LARGE SCALE GENOMIC DNA]</scope>
    <source>
        <strain>ATCC 700084 / mc(2)155</strain>
    </source>
</reference>
<reference key="2">
    <citation type="journal article" date="2007" name="Genome Biol.">
        <title>Interrupted coding sequences in Mycobacterium smegmatis: authentic mutations or sequencing errors?</title>
        <authorList>
            <person name="Deshayes C."/>
            <person name="Perrodou E."/>
            <person name="Gallien S."/>
            <person name="Euphrasie D."/>
            <person name="Schaeffer C."/>
            <person name="Van-Dorsselaer A."/>
            <person name="Poch O."/>
            <person name="Lecompte O."/>
            <person name="Reyrat J.-M."/>
        </authorList>
    </citation>
    <scope>NUCLEOTIDE SEQUENCE [LARGE SCALE GENOMIC DNA]</scope>
    <source>
        <strain>ATCC 700084 / mc(2)155</strain>
    </source>
</reference>
<reference key="3">
    <citation type="journal article" date="2009" name="Genome Res.">
        <title>Ortho-proteogenomics: multiple proteomes investigation through orthology and a new MS-based protocol.</title>
        <authorList>
            <person name="Gallien S."/>
            <person name="Perrodou E."/>
            <person name="Carapito C."/>
            <person name="Deshayes C."/>
            <person name="Reyrat J.-M."/>
            <person name="Van Dorsselaer A."/>
            <person name="Poch O."/>
            <person name="Schaeffer C."/>
            <person name="Lecompte O."/>
        </authorList>
    </citation>
    <scope>NUCLEOTIDE SEQUENCE [LARGE SCALE GENOMIC DNA]</scope>
    <source>
        <strain>ATCC 700084 / mc(2)155</strain>
    </source>
</reference>
<reference key="4">
    <citation type="journal article" date="2010" name="Mol. Biosyst.">
        <title>Expansion of the mycobacterial 'PUPylome'.</title>
        <authorList>
            <person name="Watrous J."/>
            <person name="Burns K."/>
            <person name="Liu W.T."/>
            <person name="Patel A."/>
            <person name="Hook V."/>
            <person name="Bafna V."/>
            <person name="Barry C.E. III"/>
            <person name="Bark S."/>
            <person name="Dorrestein P.C."/>
        </authorList>
    </citation>
    <scope>PUPYLATION AT LYS-76</scope>
    <scope>IDENTIFICATION BY MASS SPECTROMETRY</scope>
</reference>
<keyword id="KW-1017">Isopeptide bond</keyword>
<keyword id="KW-1185">Reference proteome</keyword>
<keyword id="KW-0832">Ubl conjugation</keyword>
<organism>
    <name type="scientific">Mycolicibacterium smegmatis (strain ATCC 700084 / mc(2)155)</name>
    <name type="common">Mycobacterium smegmatis</name>
    <dbReference type="NCBI Taxonomy" id="246196"/>
    <lineage>
        <taxon>Bacteria</taxon>
        <taxon>Bacillati</taxon>
        <taxon>Actinomycetota</taxon>
        <taxon>Actinomycetes</taxon>
        <taxon>Mycobacteriales</taxon>
        <taxon>Mycobacteriaceae</taxon>
        <taxon>Mycolicibacterium</taxon>
    </lineage>
</organism>
<proteinExistence type="evidence at protein level"/>
<accession>A0R6Q0</accession>
<accession>I7GBA9</accession>
<protein>
    <recommendedName>
        <fullName>Uncharacterized protein MSMEG_6630</fullName>
    </recommendedName>
</protein>
<gene>
    <name type="ordered locus">MSMEG_6630</name>
    <name type="ordered locus">MSMEI_6451</name>
</gene>
<name>Y6630_MYCS2</name>
<evidence type="ECO:0000255" key="1">
    <source>
        <dbReference type="PROSITE-ProRule" id="PRU01163"/>
    </source>
</evidence>
<evidence type="ECO:0000269" key="2">
    <source>
    </source>
</evidence>
<feature type="chain" id="PRO_0000396091" description="Uncharacterized protein MSMEG_6630">
    <location>
        <begin position="1"/>
        <end position="116"/>
    </location>
</feature>
<feature type="domain" description="VOC" evidence="1">
    <location>
        <begin position="5"/>
        <end position="113"/>
    </location>
</feature>
<feature type="cross-link" description="Isoglutamyl lysine isopeptide (Lys-Gln) (interchain with Q-Cter in protein Pup)" evidence="2">
    <location>
        <position position="76"/>
    </location>
</feature>
<dbReference type="EMBL" id="CP000480">
    <property type="protein sequence ID" value="ABK74785.1"/>
    <property type="molecule type" value="Genomic_DNA"/>
</dbReference>
<dbReference type="EMBL" id="CP001663">
    <property type="protein sequence ID" value="AFP42877.1"/>
    <property type="molecule type" value="Genomic_DNA"/>
</dbReference>
<dbReference type="RefSeq" id="WP_003898051.1">
    <property type="nucleotide sequence ID" value="NZ_SIJM01000031.1"/>
</dbReference>
<dbReference type="RefSeq" id="YP_890838.1">
    <property type="nucleotide sequence ID" value="NC_008596.1"/>
</dbReference>
<dbReference type="SMR" id="A0R6Q0"/>
<dbReference type="STRING" id="246196.MSMEG_6630"/>
<dbReference type="PaxDb" id="246196-MSMEI_6451"/>
<dbReference type="KEGG" id="msb:LJ00_32765"/>
<dbReference type="KEGG" id="msg:MSMEI_6451"/>
<dbReference type="KEGG" id="msm:MSMEG_6630"/>
<dbReference type="PATRIC" id="fig|246196.19.peg.6454"/>
<dbReference type="eggNOG" id="COG0346">
    <property type="taxonomic scope" value="Bacteria"/>
</dbReference>
<dbReference type="OrthoDB" id="8965356at2"/>
<dbReference type="Proteomes" id="UP000000757">
    <property type="component" value="Chromosome"/>
</dbReference>
<dbReference type="Proteomes" id="UP000006158">
    <property type="component" value="Chromosome"/>
</dbReference>
<dbReference type="Gene3D" id="3.10.180.10">
    <property type="entry name" value="2,3-Dihydroxybiphenyl 1,2-Dioxygenase, domain 1"/>
    <property type="match status" value="1"/>
</dbReference>
<dbReference type="InterPro" id="IPR029068">
    <property type="entry name" value="Glyas_Bleomycin-R_OHBP_Dase"/>
</dbReference>
<dbReference type="InterPro" id="IPR004360">
    <property type="entry name" value="Glyas_Fos-R_dOase_dom"/>
</dbReference>
<dbReference type="InterPro" id="IPR037523">
    <property type="entry name" value="VOC"/>
</dbReference>
<dbReference type="Pfam" id="PF00903">
    <property type="entry name" value="Glyoxalase"/>
    <property type="match status" value="1"/>
</dbReference>
<dbReference type="SUPFAM" id="SSF54593">
    <property type="entry name" value="Glyoxalase/Bleomycin resistance protein/Dihydroxybiphenyl dioxygenase"/>
    <property type="match status" value="1"/>
</dbReference>
<dbReference type="PROSITE" id="PS51819">
    <property type="entry name" value="VOC"/>
    <property type="match status" value="1"/>
</dbReference>